<gene>
    <name evidence="10 13" type="primary">Ythdf3</name>
</gene>
<accession>Q8BYK6</accession>
<accession>Q3UVI5</accession>
<accession>Q6NXJ6</accession>
<accession>Q6NXJ8</accession>
<accession>Q8BKB6</accession>
<comment type="function">
    <text evidence="1 5 6 7">Specifically recognizes and binds N6-methyladenosine (m6A)-containing RNAs, and regulates their stability (PubMed:32905781, PubMed:32943573). M6A is a modification present at internal sites of mRNAs and some non-coding RNAs and plays a role in mRNA stability and processing (PubMed:32943573). Acts as a regulator of mRNA stability by promoting degradation of m6A-containing mRNAs via interaction with the CCR4-NOT complex or PAN3 (PubMed:32905781, PubMed:32943573). The YTHDF paralogs (YTHDF1, YTHDF2 and YTHDF3) share m6A-containing mRNAs targets and act redundantly to mediate mRNA degradation and cellular differentiation (PubMed:32943573). Acts as a negative regulator of type I interferon response by down-regulating interferon-stimulated genes (ISGs) expression: acts by binding to FOXO3 mRNAs (PubMed:30591559). Binds to FOXO3 mRNAs independently of METTL3-mediated m6A modification (PubMed:30591559). Can also act as a regulator of mRNA stability in cooperation with YTHDF2 by binding to m6A-containing mRNA and promoting their degradation (By similarity). Recognizes and binds m6A-containing circular RNAs (circRNAs); circRNAs are generated through back-splicing of pre-mRNAs, a non-canonical splicing process promoted by dsRNA structures across circularizing exons (By similarity). Promotes formation of phase-separated membraneless compartments, such as P-bodies or stress granules, by undergoing liquid-liquid phase separation upon binding to mRNAs containing multiple m6A-modified residues: polymethylated mRNAs act as a multivalent scaffold for the binding of YTHDF proteins, juxtaposing their disordered regions and thereby leading to phase separation (By similarity). The resulting mRNA-YTHDF complexes then partition into different endogenous phase-separated membraneless compartments, such as P-bodies, stress granules or neuronal RNA granules (By similarity). May also recognize and bind N1-methyladenosine (m1A)-containing mRNAs: inhibits trophoblast invasion by binding to m1A-methylated transcripts of IGF1R, promoting their degradation (By similarity).</text>
</comment>
<comment type="subunit">
    <text evidence="1 6">Interacts with CNOT1; promoting recruitment of the CCR4-NOT complex (By similarity). Interacts with YTHDF1 (By similarity). Interacts with YTHDF2 (By similarity). Interacts with PAN3 (PubMed:32905781).</text>
</comment>
<comment type="subcellular location">
    <subcellularLocation>
        <location evidence="12">Cytoplasm</location>
        <location evidence="12">Cytosol</location>
    </subcellularLocation>
    <subcellularLocation>
        <location evidence="1">Cytoplasm</location>
        <location evidence="1">P-body</location>
    </subcellularLocation>
    <subcellularLocation>
        <location evidence="1">Cytoplasm</location>
        <location evidence="1">Stress granule</location>
    </subcellularLocation>
</comment>
<comment type="alternative products">
    <event type="alternative splicing"/>
    <isoform>
        <id>Q8BYK6-1</id>
        <name>1</name>
        <sequence type="displayed"/>
    </isoform>
    <isoform>
        <id>Q8BYK6-2</id>
        <name>2</name>
        <sequence type="described" ref="VSP_017833"/>
    </isoform>
    <isoform>
        <id>Q8BYK6-3</id>
        <name>3</name>
        <sequence type="described" ref="VSP_017834"/>
    </isoform>
</comment>
<comment type="domain">
    <text evidence="1">The disordered regions have the ability to interact with each other and to 'phase separate' into liquid droplets within the cytosol following binding to mRNAs containing multiple m6A-modified residues. This leads to the partition of m6A-containing mRNAs into membraneless compartments, where mRNAs may be stored, degraded or used to transport mRNAs to dendritic arbors in neurons.</text>
</comment>
<comment type="disruption phenotype">
    <text evidence="5 7">Mice are viable and normal in size but display increased interferon-stimulated genes (ISGs) levels and are resistant to several viral infections (PubMed:30591559). Mice lacking Ythdf1, Ythdf2 and Ythdf3 display early embryonic lethality and show defects in embryonic stem cell differentiation (PubMed:32943573).</text>
</comment>
<comment type="similarity">
    <text evidence="11">Belongs to the YTHDF family. YTHDF3 subfamily.</text>
</comment>
<comment type="caution">
    <text evidence="5 7">Was initially reported to act as a regulator of mRNA translation efficiency by binding to m6A-containing mRNAs (PubMed:30591559). This study suggested that the 3 different paralogs (YTHDF1, YTHDF2 and YTHDF3) have unique functions with limited redundancy (PubMed:32943573). However, later studies showed that YTHDF1, YTHDF2 and YTHDF3 paralogs have redundant functions to a profound extent and directly promote degradation of m6A-containing mRNAs (PubMed:32943573). The effect on translation efficiency observed earlier is probably indirect (PubMed:32943573).</text>
</comment>
<reference key="1">
    <citation type="journal article" date="2005" name="Science">
        <title>The transcriptional landscape of the mammalian genome.</title>
        <authorList>
            <person name="Carninci P."/>
            <person name="Kasukawa T."/>
            <person name="Katayama S."/>
            <person name="Gough J."/>
            <person name="Frith M.C."/>
            <person name="Maeda N."/>
            <person name="Oyama R."/>
            <person name="Ravasi T."/>
            <person name="Lenhard B."/>
            <person name="Wells C."/>
            <person name="Kodzius R."/>
            <person name="Shimokawa K."/>
            <person name="Bajic V.B."/>
            <person name="Brenner S.E."/>
            <person name="Batalov S."/>
            <person name="Forrest A.R."/>
            <person name="Zavolan M."/>
            <person name="Davis M.J."/>
            <person name="Wilming L.G."/>
            <person name="Aidinis V."/>
            <person name="Allen J.E."/>
            <person name="Ambesi-Impiombato A."/>
            <person name="Apweiler R."/>
            <person name="Aturaliya R.N."/>
            <person name="Bailey T.L."/>
            <person name="Bansal M."/>
            <person name="Baxter L."/>
            <person name="Beisel K.W."/>
            <person name="Bersano T."/>
            <person name="Bono H."/>
            <person name="Chalk A.M."/>
            <person name="Chiu K.P."/>
            <person name="Choudhary V."/>
            <person name="Christoffels A."/>
            <person name="Clutterbuck D.R."/>
            <person name="Crowe M.L."/>
            <person name="Dalla E."/>
            <person name="Dalrymple B.P."/>
            <person name="de Bono B."/>
            <person name="Della Gatta G."/>
            <person name="di Bernardo D."/>
            <person name="Down T."/>
            <person name="Engstrom P."/>
            <person name="Fagiolini M."/>
            <person name="Faulkner G."/>
            <person name="Fletcher C.F."/>
            <person name="Fukushima T."/>
            <person name="Furuno M."/>
            <person name="Futaki S."/>
            <person name="Gariboldi M."/>
            <person name="Georgii-Hemming P."/>
            <person name="Gingeras T.R."/>
            <person name="Gojobori T."/>
            <person name="Green R.E."/>
            <person name="Gustincich S."/>
            <person name="Harbers M."/>
            <person name="Hayashi Y."/>
            <person name="Hensch T.K."/>
            <person name="Hirokawa N."/>
            <person name="Hill D."/>
            <person name="Huminiecki L."/>
            <person name="Iacono M."/>
            <person name="Ikeo K."/>
            <person name="Iwama A."/>
            <person name="Ishikawa T."/>
            <person name="Jakt M."/>
            <person name="Kanapin A."/>
            <person name="Katoh M."/>
            <person name="Kawasawa Y."/>
            <person name="Kelso J."/>
            <person name="Kitamura H."/>
            <person name="Kitano H."/>
            <person name="Kollias G."/>
            <person name="Krishnan S.P."/>
            <person name="Kruger A."/>
            <person name="Kummerfeld S.K."/>
            <person name="Kurochkin I.V."/>
            <person name="Lareau L.F."/>
            <person name="Lazarevic D."/>
            <person name="Lipovich L."/>
            <person name="Liu J."/>
            <person name="Liuni S."/>
            <person name="McWilliam S."/>
            <person name="Madan Babu M."/>
            <person name="Madera M."/>
            <person name="Marchionni L."/>
            <person name="Matsuda H."/>
            <person name="Matsuzawa S."/>
            <person name="Miki H."/>
            <person name="Mignone F."/>
            <person name="Miyake S."/>
            <person name="Morris K."/>
            <person name="Mottagui-Tabar S."/>
            <person name="Mulder N."/>
            <person name="Nakano N."/>
            <person name="Nakauchi H."/>
            <person name="Ng P."/>
            <person name="Nilsson R."/>
            <person name="Nishiguchi S."/>
            <person name="Nishikawa S."/>
            <person name="Nori F."/>
            <person name="Ohara O."/>
            <person name="Okazaki Y."/>
            <person name="Orlando V."/>
            <person name="Pang K.C."/>
            <person name="Pavan W.J."/>
            <person name="Pavesi G."/>
            <person name="Pesole G."/>
            <person name="Petrovsky N."/>
            <person name="Piazza S."/>
            <person name="Reed J."/>
            <person name="Reid J.F."/>
            <person name="Ring B.Z."/>
            <person name="Ringwald M."/>
            <person name="Rost B."/>
            <person name="Ruan Y."/>
            <person name="Salzberg S.L."/>
            <person name="Sandelin A."/>
            <person name="Schneider C."/>
            <person name="Schoenbach C."/>
            <person name="Sekiguchi K."/>
            <person name="Semple C.A."/>
            <person name="Seno S."/>
            <person name="Sessa L."/>
            <person name="Sheng Y."/>
            <person name="Shibata Y."/>
            <person name="Shimada H."/>
            <person name="Shimada K."/>
            <person name="Silva D."/>
            <person name="Sinclair B."/>
            <person name="Sperling S."/>
            <person name="Stupka E."/>
            <person name="Sugiura K."/>
            <person name="Sultana R."/>
            <person name="Takenaka Y."/>
            <person name="Taki K."/>
            <person name="Tammoja K."/>
            <person name="Tan S.L."/>
            <person name="Tang S."/>
            <person name="Taylor M.S."/>
            <person name="Tegner J."/>
            <person name="Teichmann S.A."/>
            <person name="Ueda H.R."/>
            <person name="van Nimwegen E."/>
            <person name="Verardo R."/>
            <person name="Wei C.L."/>
            <person name="Yagi K."/>
            <person name="Yamanishi H."/>
            <person name="Zabarovsky E."/>
            <person name="Zhu S."/>
            <person name="Zimmer A."/>
            <person name="Hide W."/>
            <person name="Bult C."/>
            <person name="Grimmond S.M."/>
            <person name="Teasdale R.D."/>
            <person name="Liu E.T."/>
            <person name="Brusic V."/>
            <person name="Quackenbush J."/>
            <person name="Wahlestedt C."/>
            <person name="Mattick J.S."/>
            <person name="Hume D.A."/>
            <person name="Kai C."/>
            <person name="Sasaki D."/>
            <person name="Tomaru Y."/>
            <person name="Fukuda S."/>
            <person name="Kanamori-Katayama M."/>
            <person name="Suzuki M."/>
            <person name="Aoki J."/>
            <person name="Arakawa T."/>
            <person name="Iida J."/>
            <person name="Imamura K."/>
            <person name="Itoh M."/>
            <person name="Kato T."/>
            <person name="Kawaji H."/>
            <person name="Kawagashira N."/>
            <person name="Kawashima T."/>
            <person name="Kojima M."/>
            <person name="Kondo S."/>
            <person name="Konno H."/>
            <person name="Nakano K."/>
            <person name="Ninomiya N."/>
            <person name="Nishio T."/>
            <person name="Okada M."/>
            <person name="Plessy C."/>
            <person name="Shibata K."/>
            <person name="Shiraki T."/>
            <person name="Suzuki S."/>
            <person name="Tagami M."/>
            <person name="Waki K."/>
            <person name="Watahiki A."/>
            <person name="Okamura-Oho Y."/>
            <person name="Suzuki H."/>
            <person name="Kawai J."/>
            <person name="Hayashizaki Y."/>
        </authorList>
    </citation>
    <scope>NUCLEOTIDE SEQUENCE [LARGE SCALE MRNA] (ISOFORMS 2 AND 3)</scope>
    <source>
        <strain>C57BL/6J</strain>
        <tissue>Eye</tissue>
        <tissue>Hypothalamus</tissue>
        <tissue>Urinary bladder</tissue>
    </source>
</reference>
<reference key="2">
    <citation type="journal article" date="2004" name="Genome Res.">
        <title>The status, quality, and expansion of the NIH full-length cDNA project: the Mammalian Gene Collection (MGC).</title>
        <authorList>
            <consortium name="The MGC Project Team"/>
        </authorList>
    </citation>
    <scope>NUCLEOTIDE SEQUENCE [LARGE SCALE MRNA] (ISOFORMS 1 AND 2)</scope>
    <source>
        <strain>C57BL/6J</strain>
        <strain>NMRI</strain>
        <tissue>Brain</tissue>
        <tissue>Mammary tumor</tissue>
    </source>
</reference>
<reference key="3">
    <citation type="submission" date="2009-01" db="UniProtKB">
        <authorList>
            <person name="Lubec G."/>
            <person name="Sunyer B."/>
            <person name="Chen W.-Q."/>
        </authorList>
    </citation>
    <scope>PROTEIN SEQUENCE OF 196-206</scope>
    <scope>IDENTIFICATION BY MASS SPECTROMETRY</scope>
    <source>
        <strain>OF1</strain>
        <tissue>Hippocampus</tissue>
    </source>
</reference>
<reference key="4">
    <citation type="journal article" date="2010" name="Cell">
        <title>A tissue-specific atlas of mouse protein phosphorylation and expression.</title>
        <authorList>
            <person name="Huttlin E.L."/>
            <person name="Jedrychowski M.P."/>
            <person name="Elias J.E."/>
            <person name="Goswami T."/>
            <person name="Rad R."/>
            <person name="Beausoleil S.A."/>
            <person name="Villen J."/>
            <person name="Haas W."/>
            <person name="Sowa M.E."/>
            <person name="Gygi S.P."/>
        </authorList>
    </citation>
    <scope>IDENTIFICATION BY MASS SPECTROMETRY [LARGE SCALE ANALYSIS]</scope>
    <source>
        <tissue>Brain</tissue>
        <tissue>Brown adipose tissue</tissue>
        <tissue>Kidney</tissue>
        <tissue>Liver</tissue>
        <tissue>Lung</tissue>
        <tissue>Pancreas</tissue>
        <tissue>Spleen</tissue>
    </source>
</reference>
<reference key="5">
    <citation type="journal article" date="2019" name="Proc. Natl. Acad. Sci. U.S.A.">
        <title>RNA-binding protein YTHDF3 suppresses interferon-dependent antiviral responses by promoting FOXO3 translation.</title>
        <authorList>
            <person name="Zhang Y."/>
            <person name="Wang X."/>
            <person name="Zhang X."/>
            <person name="Wang J."/>
            <person name="Ma Y."/>
            <person name="Zhang L."/>
            <person name="Cao X."/>
        </authorList>
    </citation>
    <scope>FUNCTION</scope>
    <scope>DISRUPTION PHENOTYPE</scope>
</reference>
<reference key="6">
    <citation type="journal article" date="2020" name="Cell Rep.">
        <title>YTHDF2/3 are required for somatic reprogramming through different RNA deadenylation pathways.</title>
        <authorList>
            <person name="Liu J."/>
            <person name="Gao M."/>
            <person name="Xu S."/>
            <person name="Chen Y."/>
            <person name="Wu K."/>
            <person name="Liu H."/>
            <person name="Wang J."/>
            <person name="Yang X."/>
            <person name="Wang J."/>
            <person name="Liu W."/>
            <person name="Bao X."/>
            <person name="Chen J."/>
        </authorList>
    </citation>
    <scope>FUNCTION</scope>
    <scope>INTERACTION WITH PAN3</scope>
</reference>
<reference key="7">
    <citation type="journal article" date="2020" name="Genes Dev.">
        <title>Context-dependent functional compensation between Ythdf m6A reader proteins.</title>
        <authorList>
            <person name="Lasman L."/>
            <person name="Krupalnik V."/>
            <person name="Viukov S."/>
            <person name="Mor N."/>
            <person name="Aguilera-Castrejon A."/>
            <person name="Schneir D."/>
            <person name="Bayerl J."/>
            <person name="Mizrahi O."/>
            <person name="Peles S."/>
            <person name="Tawil S."/>
            <person name="Sathe S."/>
            <person name="Nachshon A."/>
            <person name="Shani T."/>
            <person name="Zerbib M."/>
            <person name="Kilimnik I."/>
            <person name="Aigner S."/>
            <person name="Shankar A."/>
            <person name="Mueller J.R."/>
            <person name="Schwartz S."/>
            <person name="Stern-Ginossar N."/>
            <person name="Yeo G.W."/>
            <person name="Geula S."/>
            <person name="Novershtern N."/>
            <person name="Hanna J.H."/>
        </authorList>
    </citation>
    <scope>FUNCTION</scope>
    <scope>SUBCELLULAR LOCATION</scope>
    <scope>DISRUPTION PHENOTYPE</scope>
</reference>
<sequence>MSATSVDQRPKGQGNKVSVQNGSIHQKDAVNDDDFEPYLSSQTNQNNSYPPMSDPYMPSYYAPSIGFPYSLGEAAWSTAGDQPMPYLTTYGQMSNGEHHYIPDGVFSQPGALGNTPPFLGQHGFNFFPGNADFSTWGTSGSQGQSTQNSAYSSSYGYPPSSLGRAITDGQAGFGNDTLSKVPGISSIEQGMTGLKIGGDLTAAVTKTVGTALSSSGMTSIATNNVPPVSSAAPKPTSWAAIARKPAKPQPKLKPKGNVGIGGSAVPPPPIKHNMNIGTWDEKGSVVKAPPTQPVLPPQTIIQQPQPLIQPPPLVQSQLPQQQPQPPQPQQQQGPQPQAQPHQVQSQQPQLQNRWVAPRNRGTGFNQNNGTGSENFGLGVVPVSASPSSVEVHPVLEKLKAINNYNPKDFDWNLKNGRVFIIKSYSEDDIHRSIKYSIWCSTEHGNKRLDAAYRSLNGKGPLYLLFSVNGSGHFCGVAEMKSVVDYNAYAGVWSQDKWKGKFEVKWIFVKDVPNNQLRHIRLENNDNKPVTNSRDTQEVPLEKAKQVLKIIATFKHTTSIFDDFAHYEKRQEEEEAMRRERNRNKQ</sequence>
<dbReference type="EMBL" id="AK137245">
    <property type="protein sequence ID" value="BAE23284.1"/>
    <property type="molecule type" value="mRNA"/>
</dbReference>
<dbReference type="EMBL" id="AK039176">
    <property type="protein sequence ID" value="BAC30267.1"/>
    <property type="molecule type" value="mRNA"/>
</dbReference>
<dbReference type="EMBL" id="AK053736">
    <property type="protein sequence ID" value="BAC35498.1"/>
    <property type="molecule type" value="mRNA"/>
</dbReference>
<dbReference type="EMBL" id="BC057158">
    <property type="protein sequence ID" value="AAH57158.1"/>
    <property type="molecule type" value="mRNA"/>
</dbReference>
<dbReference type="EMBL" id="BC067040">
    <property type="protein sequence ID" value="AAH67040.1"/>
    <property type="molecule type" value="mRNA"/>
</dbReference>
<dbReference type="EMBL" id="BC067042">
    <property type="protein sequence ID" value="AAH67042.1"/>
    <property type="molecule type" value="mRNA"/>
</dbReference>
<dbReference type="CCDS" id="CCDS38396.1">
    <molecule id="Q8BYK6-3"/>
</dbReference>
<dbReference type="CCDS" id="CCDS50869.1">
    <molecule id="Q8BYK6-1"/>
</dbReference>
<dbReference type="CCDS" id="CCDS89615.1">
    <molecule id="Q8BYK6-2"/>
</dbReference>
<dbReference type="RefSeq" id="NP_001139391.1">
    <molecule id="Q8BYK6-1"/>
    <property type="nucleotide sequence ID" value="NM_001145919.2"/>
</dbReference>
<dbReference type="RefSeq" id="NP_001344970.1">
    <molecule id="Q8BYK6-2"/>
    <property type="nucleotide sequence ID" value="NM_001358041.1"/>
</dbReference>
<dbReference type="RefSeq" id="NP_766265.3">
    <molecule id="Q8BYK6-3"/>
    <property type="nucleotide sequence ID" value="NM_172677.3"/>
</dbReference>
<dbReference type="SMR" id="Q8BYK6"/>
<dbReference type="BioGRID" id="230816">
    <property type="interactions" value="5"/>
</dbReference>
<dbReference type="FunCoup" id="Q8BYK6">
    <property type="interactions" value="4326"/>
</dbReference>
<dbReference type="STRING" id="10090.ENSMUSP00000103983"/>
<dbReference type="GlyGen" id="Q8BYK6">
    <property type="glycosylation" value="9 sites, 2 N-linked glycans (2 sites), 1 O-linked glycan (7 sites)"/>
</dbReference>
<dbReference type="iPTMnet" id="Q8BYK6"/>
<dbReference type="PhosphoSitePlus" id="Q8BYK6"/>
<dbReference type="SwissPalm" id="Q8BYK6"/>
<dbReference type="jPOST" id="Q8BYK6"/>
<dbReference type="PaxDb" id="10090-ENSMUSP00000103983"/>
<dbReference type="PeptideAtlas" id="Q8BYK6"/>
<dbReference type="ProteomicsDB" id="275050">
    <molecule id="Q8BYK6-1"/>
</dbReference>
<dbReference type="ProteomicsDB" id="275051">
    <molecule id="Q8BYK6-2"/>
</dbReference>
<dbReference type="ProteomicsDB" id="275052">
    <molecule id="Q8BYK6-3"/>
</dbReference>
<dbReference type="Pumba" id="Q8BYK6"/>
<dbReference type="Antibodypedia" id="24763">
    <property type="antibodies" value="139 antibodies from 22 providers"/>
</dbReference>
<dbReference type="DNASU" id="229096"/>
<dbReference type="Ensembl" id="ENSMUST00000108345.9">
    <molecule id="Q8BYK6-1"/>
    <property type="protein sequence ID" value="ENSMUSP00000103982.3"/>
    <property type="gene ID" value="ENSMUSG00000047213.15"/>
</dbReference>
<dbReference type="Ensembl" id="ENSMUST00000108346.5">
    <molecule id="Q8BYK6-3"/>
    <property type="protein sequence ID" value="ENSMUSP00000103983.3"/>
    <property type="gene ID" value="ENSMUSG00000047213.15"/>
</dbReference>
<dbReference type="Ensembl" id="ENSMUST00000191774.6">
    <molecule id="Q8BYK6-2"/>
    <property type="protein sequence ID" value="ENSMUSP00000141610.2"/>
    <property type="gene ID" value="ENSMUSG00000047213.15"/>
</dbReference>
<dbReference type="GeneID" id="229096"/>
<dbReference type="KEGG" id="mmu:229096"/>
<dbReference type="UCSC" id="uc008org.3">
    <molecule id="Q8BYK6-3"/>
    <property type="organism name" value="mouse"/>
</dbReference>
<dbReference type="UCSC" id="uc008orh.3">
    <molecule id="Q8BYK6-2"/>
    <property type="organism name" value="mouse"/>
</dbReference>
<dbReference type="UCSC" id="uc008ori.3">
    <molecule id="Q8BYK6-1"/>
    <property type="organism name" value="mouse"/>
</dbReference>
<dbReference type="AGR" id="MGI:1918850"/>
<dbReference type="CTD" id="253943"/>
<dbReference type="MGI" id="MGI:1918850">
    <property type="gene designation" value="Ythdf3"/>
</dbReference>
<dbReference type="VEuPathDB" id="HostDB:ENSMUSG00000047213"/>
<dbReference type="eggNOG" id="KOG1901">
    <property type="taxonomic scope" value="Eukaryota"/>
</dbReference>
<dbReference type="GeneTree" id="ENSGT00940000158777"/>
<dbReference type="HOGENOM" id="CLU_022715_1_1_1"/>
<dbReference type="InParanoid" id="Q8BYK6"/>
<dbReference type="OMA" id="GAYRSMG"/>
<dbReference type="PhylomeDB" id="Q8BYK6"/>
<dbReference type="TreeFam" id="TF323736"/>
<dbReference type="BioGRID-ORCS" id="229096">
    <property type="hits" value="6 hits in 78 CRISPR screens"/>
</dbReference>
<dbReference type="CD-CODE" id="CE726F99">
    <property type="entry name" value="Postsynaptic density"/>
</dbReference>
<dbReference type="ChiTaRS" id="Ythdf3">
    <property type="organism name" value="mouse"/>
</dbReference>
<dbReference type="PRO" id="PR:Q8BYK6"/>
<dbReference type="Proteomes" id="UP000000589">
    <property type="component" value="Chromosome 3"/>
</dbReference>
<dbReference type="RNAct" id="Q8BYK6">
    <property type="molecule type" value="protein"/>
</dbReference>
<dbReference type="Bgee" id="ENSMUSG00000047213">
    <property type="expression patterns" value="Expressed in indifferent gonad and 260 other cell types or tissues"/>
</dbReference>
<dbReference type="GO" id="GO:0005737">
    <property type="term" value="C:cytoplasm"/>
    <property type="evidence" value="ECO:0000314"/>
    <property type="project" value="UniProtKB"/>
</dbReference>
<dbReference type="GO" id="GO:0010494">
    <property type="term" value="C:cytoplasmic stress granule"/>
    <property type="evidence" value="ECO:0000250"/>
    <property type="project" value="UniProtKB"/>
</dbReference>
<dbReference type="GO" id="GO:0005829">
    <property type="term" value="C:cytosol"/>
    <property type="evidence" value="ECO:0007669"/>
    <property type="project" value="UniProtKB-SubCell"/>
</dbReference>
<dbReference type="GO" id="GO:0000932">
    <property type="term" value="C:P-body"/>
    <property type="evidence" value="ECO:0000250"/>
    <property type="project" value="UniProtKB"/>
</dbReference>
<dbReference type="GO" id="GO:1990247">
    <property type="term" value="F:N6-methyladenosine-containing RNA reader activity"/>
    <property type="evidence" value="ECO:0000250"/>
    <property type="project" value="UniProtKB"/>
</dbReference>
<dbReference type="GO" id="GO:0043022">
    <property type="term" value="F:ribosome binding"/>
    <property type="evidence" value="ECO:0000250"/>
    <property type="project" value="UniProtKB"/>
</dbReference>
<dbReference type="GO" id="GO:0003723">
    <property type="term" value="F:RNA binding"/>
    <property type="evidence" value="ECO:0007669"/>
    <property type="project" value="UniProtKB-KW"/>
</dbReference>
<dbReference type="GO" id="GO:0061157">
    <property type="term" value="P:mRNA destabilization"/>
    <property type="evidence" value="ECO:0000315"/>
    <property type="project" value="UniProtKB"/>
</dbReference>
<dbReference type="GO" id="GO:0060339">
    <property type="term" value="P:negative regulation of type I interferon-mediated signaling pathway"/>
    <property type="evidence" value="ECO:0000315"/>
    <property type="project" value="UniProtKB"/>
</dbReference>
<dbReference type="GO" id="GO:0070925">
    <property type="term" value="P:organelle assembly"/>
    <property type="evidence" value="ECO:0000250"/>
    <property type="project" value="UniProtKB"/>
</dbReference>
<dbReference type="GO" id="GO:0045727">
    <property type="term" value="P:positive regulation of translation"/>
    <property type="evidence" value="ECO:0000250"/>
    <property type="project" value="UniProtKB"/>
</dbReference>
<dbReference type="GO" id="GO:0043488">
    <property type="term" value="P:regulation of mRNA stability"/>
    <property type="evidence" value="ECO:0000315"/>
    <property type="project" value="UniProtKB"/>
</dbReference>
<dbReference type="GO" id="GO:1901163">
    <property type="term" value="P:regulation of trophoblast cell migration"/>
    <property type="evidence" value="ECO:0000250"/>
    <property type="project" value="UniProtKB"/>
</dbReference>
<dbReference type="GO" id="GO:0034063">
    <property type="term" value="P:stress granule assembly"/>
    <property type="evidence" value="ECO:0000250"/>
    <property type="project" value="UniProtKB"/>
</dbReference>
<dbReference type="CDD" id="cd21134">
    <property type="entry name" value="YTH"/>
    <property type="match status" value="1"/>
</dbReference>
<dbReference type="FunFam" id="3.10.590.10:FF:000001">
    <property type="entry name" value="YTH domain family 1, isoform CRA_a"/>
    <property type="match status" value="1"/>
</dbReference>
<dbReference type="Gene3D" id="3.10.590.10">
    <property type="entry name" value="ph1033 like domains"/>
    <property type="match status" value="1"/>
</dbReference>
<dbReference type="InterPro" id="IPR007275">
    <property type="entry name" value="YTH_domain"/>
</dbReference>
<dbReference type="InterPro" id="IPR045168">
    <property type="entry name" value="YTH_prot"/>
</dbReference>
<dbReference type="PANTHER" id="PTHR12357:SF9">
    <property type="entry name" value="YTH DOMAIN-CONTAINING FAMILY PROTEIN 3"/>
    <property type="match status" value="1"/>
</dbReference>
<dbReference type="PANTHER" id="PTHR12357">
    <property type="entry name" value="YTH YT521-B HOMOLOGY DOMAIN-CONTAINING"/>
    <property type="match status" value="1"/>
</dbReference>
<dbReference type="Pfam" id="PF04146">
    <property type="entry name" value="YTH"/>
    <property type="match status" value="1"/>
</dbReference>
<dbReference type="SUPFAM" id="SSF81995">
    <property type="entry name" value="beta-sandwich domain of Sec23/24"/>
    <property type="match status" value="1"/>
</dbReference>
<dbReference type="PROSITE" id="PS50882">
    <property type="entry name" value="YTH"/>
    <property type="match status" value="1"/>
</dbReference>
<name>YTHD3_MOUSE</name>
<organism>
    <name type="scientific">Mus musculus</name>
    <name type="common">Mouse</name>
    <dbReference type="NCBI Taxonomy" id="10090"/>
    <lineage>
        <taxon>Eukaryota</taxon>
        <taxon>Metazoa</taxon>
        <taxon>Chordata</taxon>
        <taxon>Craniata</taxon>
        <taxon>Vertebrata</taxon>
        <taxon>Euteleostomi</taxon>
        <taxon>Mammalia</taxon>
        <taxon>Eutheria</taxon>
        <taxon>Euarchontoglires</taxon>
        <taxon>Glires</taxon>
        <taxon>Rodentia</taxon>
        <taxon>Myomorpha</taxon>
        <taxon>Muroidea</taxon>
        <taxon>Muridae</taxon>
        <taxon>Murinae</taxon>
        <taxon>Mus</taxon>
        <taxon>Mus</taxon>
    </lineage>
</organism>
<feature type="initiator methionine" description="Removed" evidence="1">
    <location>
        <position position="1"/>
    </location>
</feature>
<feature type="chain" id="PRO_0000230992" description="YTH domain-containing family protein 3">
    <location>
        <begin position="2"/>
        <end position="585"/>
    </location>
</feature>
<feature type="domain" description="YTH" evidence="3">
    <location>
        <begin position="416"/>
        <end position="550"/>
    </location>
</feature>
<feature type="region of interest" description="Disordered" evidence="4">
    <location>
        <begin position="1"/>
        <end position="51"/>
    </location>
</feature>
<feature type="region of interest" description="Disordered" evidence="4">
    <location>
        <begin position="244"/>
        <end position="277"/>
    </location>
</feature>
<feature type="region of interest" description="Disordered" evidence="4">
    <location>
        <begin position="304"/>
        <end position="350"/>
    </location>
</feature>
<feature type="compositionally biased region" description="Polar residues" evidence="4">
    <location>
        <begin position="15"/>
        <end position="24"/>
    </location>
</feature>
<feature type="compositionally biased region" description="Basic residues" evidence="4">
    <location>
        <begin position="244"/>
        <end position="254"/>
    </location>
</feature>
<feature type="compositionally biased region" description="Low complexity" evidence="4">
    <location>
        <begin position="329"/>
        <end position="350"/>
    </location>
</feature>
<feature type="binding site" evidence="1">
    <location>
        <begin position="422"/>
        <end position="424"/>
    </location>
    <ligand>
        <name>RNA</name>
        <dbReference type="ChEBI" id="CHEBI:33697"/>
    </ligand>
    <ligandPart>
        <name>N(6)-methyladenosine 5'-phosphate residue</name>
        <dbReference type="ChEBI" id="CHEBI:74449"/>
    </ligandPart>
</feature>
<feature type="binding site" evidence="2">
    <location>
        <position position="428"/>
    </location>
    <ligand>
        <name>RNA</name>
        <dbReference type="ChEBI" id="CHEBI:33697"/>
    </ligand>
    <ligandPart>
        <name>N(6)-methyladenosine 5'-phosphate residue</name>
        <dbReference type="ChEBI" id="CHEBI:74449"/>
    </ligandPart>
</feature>
<feature type="binding site" evidence="1">
    <location>
        <begin position="438"/>
        <end position="439"/>
    </location>
    <ligand>
        <name>RNA</name>
        <dbReference type="ChEBI" id="CHEBI:33697"/>
    </ligand>
    <ligandPart>
        <name>N(6)-methyladenosine 5'-phosphate residue</name>
        <dbReference type="ChEBI" id="CHEBI:74449"/>
    </ligandPart>
</feature>
<feature type="binding site" evidence="2">
    <location>
        <position position="468"/>
    </location>
    <ligand>
        <name>RNA</name>
        <dbReference type="ChEBI" id="CHEBI:33697"/>
    </ligand>
    <ligandPart>
        <name>N(6)-methyladenosine 5'-phosphate residue</name>
        <dbReference type="ChEBI" id="CHEBI:74449"/>
    </ligandPart>
</feature>
<feature type="binding site" evidence="1">
    <location>
        <position position="492"/>
    </location>
    <ligand>
        <name>RNA</name>
        <dbReference type="ChEBI" id="CHEBI:33697"/>
    </ligand>
    <ligandPart>
        <name>N(6)-methyladenosine 5'-phosphate residue</name>
        <dbReference type="ChEBI" id="CHEBI:74449"/>
    </ligandPart>
</feature>
<feature type="binding site" evidence="1">
    <location>
        <position position="497"/>
    </location>
    <ligand>
        <name>RNA</name>
        <dbReference type="ChEBI" id="CHEBI:33697"/>
    </ligand>
    <ligandPart>
        <name>N(6)-methyladenosine 5'-phosphate residue</name>
        <dbReference type="ChEBI" id="CHEBI:74449"/>
    </ligandPart>
</feature>
<feature type="modified residue" description="N-acetylserine" evidence="1">
    <location>
        <position position="2"/>
    </location>
</feature>
<feature type="modified residue" description="Phosphoserine" evidence="1">
    <location>
        <position position="23"/>
    </location>
</feature>
<feature type="splice variant" id="VSP_017833" description="In isoform 2." evidence="8 9">
    <original>MSATSVDQRPKGQGNKV</original>
    <variation>MFYLDLTLLHRATEETGEESF</variation>
    <location>
        <begin position="1"/>
        <end position="17"/>
    </location>
</feature>
<feature type="splice variant" id="VSP_017834" description="In isoform 3." evidence="9">
    <original>Q</original>
    <variation>QKYRRAKQLFHC</variation>
    <location>
        <position position="45"/>
    </location>
</feature>
<feature type="sequence conflict" description="In Ref. 2; AAH67042." evidence="11" ref="2">
    <original>A</original>
    <variation>P</variation>
    <location>
        <position position="231"/>
    </location>
</feature>
<feature type="sequence conflict" description="In Ref. 1; BAC30267." evidence="11" ref="1">
    <original>E</original>
    <variation>G</variation>
    <location>
        <position position="502"/>
    </location>
</feature>
<feature type="sequence conflict" description="In Ref. 1; BAE23284." evidence="11" ref="1">
    <original>N</original>
    <variation>D</variation>
    <location>
        <position position="531"/>
    </location>
</feature>
<protein>
    <recommendedName>
        <fullName evidence="11">YTH domain-containing family protein 3</fullName>
    </recommendedName>
</protein>
<keyword id="KW-0007">Acetylation</keyword>
<keyword id="KW-0025">Alternative splicing</keyword>
<keyword id="KW-0963">Cytoplasm</keyword>
<keyword id="KW-0903">Direct protein sequencing</keyword>
<keyword id="KW-0597">Phosphoprotein</keyword>
<keyword id="KW-1185">Reference proteome</keyword>
<keyword id="KW-0694">RNA-binding</keyword>
<proteinExistence type="evidence at protein level"/>
<evidence type="ECO:0000250" key="1">
    <source>
        <dbReference type="UniProtKB" id="Q7Z739"/>
    </source>
</evidence>
<evidence type="ECO:0000250" key="2">
    <source>
        <dbReference type="UniProtKB" id="Q9Y5A9"/>
    </source>
</evidence>
<evidence type="ECO:0000255" key="3">
    <source>
        <dbReference type="PROSITE-ProRule" id="PRU00225"/>
    </source>
</evidence>
<evidence type="ECO:0000256" key="4">
    <source>
        <dbReference type="SAM" id="MobiDB-lite"/>
    </source>
</evidence>
<evidence type="ECO:0000269" key="5">
    <source>
    </source>
</evidence>
<evidence type="ECO:0000269" key="6">
    <source>
    </source>
</evidence>
<evidence type="ECO:0000269" key="7">
    <source>
    </source>
</evidence>
<evidence type="ECO:0000303" key="8">
    <source>
    </source>
</evidence>
<evidence type="ECO:0000303" key="9">
    <source>
    </source>
</evidence>
<evidence type="ECO:0000303" key="10">
    <source>
    </source>
</evidence>
<evidence type="ECO:0000305" key="11"/>
<evidence type="ECO:0000305" key="12">
    <source>
    </source>
</evidence>
<evidence type="ECO:0000312" key="13">
    <source>
        <dbReference type="MGI" id="MGI:1918850"/>
    </source>
</evidence>